<dbReference type="EC" id="3.6.4.-" evidence="1"/>
<dbReference type="EMBL" id="CP000854">
    <property type="protein sequence ID" value="ACC40561.1"/>
    <property type="molecule type" value="Genomic_DNA"/>
</dbReference>
<dbReference type="RefSeq" id="WP_012393880.1">
    <property type="nucleotide sequence ID" value="NC_010612.1"/>
</dbReference>
<dbReference type="SMR" id="B2HN63"/>
<dbReference type="STRING" id="216594.MMAR_2111"/>
<dbReference type="GeneID" id="34339364"/>
<dbReference type="GeneID" id="93437645"/>
<dbReference type="KEGG" id="mmi:MMAR_2111"/>
<dbReference type="eggNOG" id="COG2255">
    <property type="taxonomic scope" value="Bacteria"/>
</dbReference>
<dbReference type="HOGENOM" id="CLU_055599_1_0_11"/>
<dbReference type="OrthoDB" id="9804478at2"/>
<dbReference type="Proteomes" id="UP000001190">
    <property type="component" value="Chromosome"/>
</dbReference>
<dbReference type="GO" id="GO:0005737">
    <property type="term" value="C:cytoplasm"/>
    <property type="evidence" value="ECO:0007669"/>
    <property type="project" value="UniProtKB-SubCell"/>
</dbReference>
<dbReference type="GO" id="GO:0048476">
    <property type="term" value="C:Holliday junction resolvase complex"/>
    <property type="evidence" value="ECO:0007669"/>
    <property type="project" value="UniProtKB-UniRule"/>
</dbReference>
<dbReference type="GO" id="GO:0005524">
    <property type="term" value="F:ATP binding"/>
    <property type="evidence" value="ECO:0007669"/>
    <property type="project" value="UniProtKB-UniRule"/>
</dbReference>
<dbReference type="GO" id="GO:0016887">
    <property type="term" value="F:ATP hydrolysis activity"/>
    <property type="evidence" value="ECO:0007669"/>
    <property type="project" value="InterPro"/>
</dbReference>
<dbReference type="GO" id="GO:0000400">
    <property type="term" value="F:four-way junction DNA binding"/>
    <property type="evidence" value="ECO:0007669"/>
    <property type="project" value="UniProtKB-UniRule"/>
</dbReference>
<dbReference type="GO" id="GO:0009378">
    <property type="term" value="F:four-way junction helicase activity"/>
    <property type="evidence" value="ECO:0007669"/>
    <property type="project" value="InterPro"/>
</dbReference>
<dbReference type="GO" id="GO:0006310">
    <property type="term" value="P:DNA recombination"/>
    <property type="evidence" value="ECO:0007669"/>
    <property type="project" value="UniProtKB-UniRule"/>
</dbReference>
<dbReference type="GO" id="GO:0006281">
    <property type="term" value="P:DNA repair"/>
    <property type="evidence" value="ECO:0007669"/>
    <property type="project" value="UniProtKB-UniRule"/>
</dbReference>
<dbReference type="CDD" id="cd00009">
    <property type="entry name" value="AAA"/>
    <property type="match status" value="1"/>
</dbReference>
<dbReference type="Gene3D" id="1.10.8.60">
    <property type="match status" value="1"/>
</dbReference>
<dbReference type="Gene3D" id="3.40.50.300">
    <property type="entry name" value="P-loop containing nucleotide triphosphate hydrolases"/>
    <property type="match status" value="1"/>
</dbReference>
<dbReference type="Gene3D" id="1.10.10.10">
    <property type="entry name" value="Winged helix-like DNA-binding domain superfamily/Winged helix DNA-binding domain"/>
    <property type="match status" value="1"/>
</dbReference>
<dbReference type="HAMAP" id="MF_00016">
    <property type="entry name" value="DNA_HJ_migration_RuvB"/>
    <property type="match status" value="1"/>
</dbReference>
<dbReference type="InterPro" id="IPR003593">
    <property type="entry name" value="AAA+_ATPase"/>
</dbReference>
<dbReference type="InterPro" id="IPR041445">
    <property type="entry name" value="AAA_lid_4"/>
</dbReference>
<dbReference type="InterPro" id="IPR004605">
    <property type="entry name" value="DNA_helicase_Holl-junc_RuvB"/>
</dbReference>
<dbReference type="InterPro" id="IPR027417">
    <property type="entry name" value="P-loop_NTPase"/>
</dbReference>
<dbReference type="InterPro" id="IPR008824">
    <property type="entry name" value="RuvB-like_N"/>
</dbReference>
<dbReference type="InterPro" id="IPR008823">
    <property type="entry name" value="RuvB_C"/>
</dbReference>
<dbReference type="InterPro" id="IPR036388">
    <property type="entry name" value="WH-like_DNA-bd_sf"/>
</dbReference>
<dbReference type="InterPro" id="IPR036390">
    <property type="entry name" value="WH_DNA-bd_sf"/>
</dbReference>
<dbReference type="NCBIfam" id="NF000868">
    <property type="entry name" value="PRK00080.1"/>
    <property type="match status" value="1"/>
</dbReference>
<dbReference type="NCBIfam" id="TIGR00635">
    <property type="entry name" value="ruvB"/>
    <property type="match status" value="1"/>
</dbReference>
<dbReference type="PANTHER" id="PTHR42848">
    <property type="match status" value="1"/>
</dbReference>
<dbReference type="PANTHER" id="PTHR42848:SF1">
    <property type="entry name" value="HOLLIDAY JUNCTION BRANCH MIGRATION COMPLEX SUBUNIT RUVB"/>
    <property type="match status" value="1"/>
</dbReference>
<dbReference type="Pfam" id="PF17864">
    <property type="entry name" value="AAA_lid_4"/>
    <property type="match status" value="1"/>
</dbReference>
<dbReference type="Pfam" id="PF05491">
    <property type="entry name" value="RuvB_C"/>
    <property type="match status" value="1"/>
</dbReference>
<dbReference type="Pfam" id="PF05496">
    <property type="entry name" value="RuvB_N"/>
    <property type="match status" value="1"/>
</dbReference>
<dbReference type="PRINTS" id="PR00830">
    <property type="entry name" value="ENDOLAPTASE"/>
</dbReference>
<dbReference type="SMART" id="SM00382">
    <property type="entry name" value="AAA"/>
    <property type="match status" value="1"/>
</dbReference>
<dbReference type="SUPFAM" id="SSF52540">
    <property type="entry name" value="P-loop containing nucleoside triphosphate hydrolases"/>
    <property type="match status" value="1"/>
</dbReference>
<dbReference type="SUPFAM" id="SSF46785">
    <property type="entry name" value="Winged helix' DNA-binding domain"/>
    <property type="match status" value="1"/>
</dbReference>
<gene>
    <name evidence="1" type="primary">ruvB</name>
    <name type="ordered locus">MMAR_2111</name>
</gene>
<keyword id="KW-0067">ATP-binding</keyword>
<keyword id="KW-0963">Cytoplasm</keyword>
<keyword id="KW-0227">DNA damage</keyword>
<keyword id="KW-0233">DNA recombination</keyword>
<keyword id="KW-0234">DNA repair</keyword>
<keyword id="KW-0238">DNA-binding</keyword>
<keyword id="KW-0378">Hydrolase</keyword>
<keyword id="KW-0547">Nucleotide-binding</keyword>
<keyword id="KW-1185">Reference proteome</keyword>
<evidence type="ECO:0000255" key="1">
    <source>
        <dbReference type="HAMAP-Rule" id="MF_00016"/>
    </source>
</evidence>
<accession>B2HN63</accession>
<proteinExistence type="inferred from homology"/>
<protein>
    <recommendedName>
        <fullName evidence="1">Holliday junction branch migration complex subunit RuvB</fullName>
        <ecNumber evidence="1">3.6.4.-</ecNumber>
    </recommendedName>
</protein>
<comment type="function">
    <text evidence="1">The RuvA-RuvB-RuvC complex processes Holliday junction (HJ) DNA during genetic recombination and DNA repair, while the RuvA-RuvB complex plays an important role in the rescue of blocked DNA replication forks via replication fork reversal (RFR). RuvA specifically binds to HJ cruciform DNA, conferring on it an open structure. The RuvB hexamer acts as an ATP-dependent pump, pulling dsDNA into and through the RuvAB complex. RuvB forms 2 homohexamers on either side of HJ DNA bound by 1 or 2 RuvA tetramers; 4 subunits per hexamer contact DNA at a time. Coordinated motions by a converter formed by DNA-disengaged RuvB subunits stimulates ATP hydrolysis and nucleotide exchange. Immobilization of the converter enables RuvB to convert the ATP-contained energy into a lever motion, pulling 2 nucleotides of DNA out of the RuvA tetramer per ATP hydrolyzed, thus driving DNA branch migration. The RuvB motors rotate together with the DNA substrate, which together with the progressing nucleotide cycle form the mechanistic basis for DNA recombination by continuous HJ branch migration. Branch migration allows RuvC to scan DNA until it finds its consensus sequence, where it cleaves and resolves cruciform DNA.</text>
</comment>
<comment type="catalytic activity">
    <reaction evidence="1">
        <text>ATP + H2O = ADP + phosphate + H(+)</text>
        <dbReference type="Rhea" id="RHEA:13065"/>
        <dbReference type="ChEBI" id="CHEBI:15377"/>
        <dbReference type="ChEBI" id="CHEBI:15378"/>
        <dbReference type="ChEBI" id="CHEBI:30616"/>
        <dbReference type="ChEBI" id="CHEBI:43474"/>
        <dbReference type="ChEBI" id="CHEBI:456216"/>
    </reaction>
</comment>
<comment type="subunit">
    <text evidence="1">Homohexamer. Forms an RuvA(8)-RuvB(12)-Holliday junction (HJ) complex. HJ DNA is sandwiched between 2 RuvA tetramers; dsDNA enters through RuvA and exits via RuvB. An RuvB hexamer assembles on each DNA strand where it exits the tetramer. Each RuvB hexamer is contacted by two RuvA subunits (via domain III) on 2 adjacent RuvB subunits; this complex drives branch migration. In the full resolvosome a probable DNA-RuvA(4)-RuvB(12)-RuvC(2) complex forms which resolves the HJ.</text>
</comment>
<comment type="subcellular location">
    <subcellularLocation>
        <location evidence="1">Cytoplasm</location>
    </subcellularLocation>
</comment>
<comment type="domain">
    <text evidence="1">Has 3 domains, the large (RuvB-L) and small ATPase (RuvB-S) domains and the C-terminal head (RuvB-H) domain. The head domain binds DNA, while the ATPase domains jointly bind ATP, ADP or are empty depending on the state of the subunit in the translocation cycle. During a single DNA translocation step the structure of each domain remains the same, but their relative positions change.</text>
</comment>
<comment type="similarity">
    <text evidence="1">Belongs to the RuvB family.</text>
</comment>
<organism>
    <name type="scientific">Mycobacterium marinum (strain ATCC BAA-535 / M)</name>
    <dbReference type="NCBI Taxonomy" id="216594"/>
    <lineage>
        <taxon>Bacteria</taxon>
        <taxon>Bacillati</taxon>
        <taxon>Actinomycetota</taxon>
        <taxon>Actinomycetes</taxon>
        <taxon>Mycobacteriales</taxon>
        <taxon>Mycobacteriaceae</taxon>
        <taxon>Mycobacterium</taxon>
        <taxon>Mycobacterium ulcerans group</taxon>
    </lineage>
</organism>
<name>RUVB_MYCMM</name>
<reference key="1">
    <citation type="journal article" date="2008" name="Genome Res.">
        <title>Insights from the complete genome sequence of Mycobacterium marinum on the evolution of Mycobacterium tuberculosis.</title>
        <authorList>
            <person name="Stinear T.P."/>
            <person name="Seemann T."/>
            <person name="Harrison P.F."/>
            <person name="Jenkin G.A."/>
            <person name="Davies J.K."/>
            <person name="Johnson P.D."/>
            <person name="Abdellah Z."/>
            <person name="Arrowsmith C."/>
            <person name="Chillingworth T."/>
            <person name="Churcher C."/>
            <person name="Clarke K."/>
            <person name="Cronin A."/>
            <person name="Davis P."/>
            <person name="Goodhead I."/>
            <person name="Holroyd N."/>
            <person name="Jagels K."/>
            <person name="Lord A."/>
            <person name="Moule S."/>
            <person name="Mungall K."/>
            <person name="Norbertczak H."/>
            <person name="Quail M.A."/>
            <person name="Rabbinowitsch E."/>
            <person name="Walker D."/>
            <person name="White B."/>
            <person name="Whitehead S."/>
            <person name="Small P.L."/>
            <person name="Brosch R."/>
            <person name="Ramakrishnan L."/>
            <person name="Fischbach M.A."/>
            <person name="Parkhill J."/>
            <person name="Cole S.T."/>
        </authorList>
    </citation>
    <scope>NUCLEOTIDE SEQUENCE [LARGE SCALE GENOMIC DNA]</scope>
    <source>
        <strain>ATCC BAA-535 / M</strain>
    </source>
</reference>
<sequence length="345" mass="36700">MSTDPDEREVSPALTVGDGDVDVSLRPRSLREFIGQPRVREQLQLVIQGAKNRGGTPDHILLSGPPGLGKTSLAMIIAAELGSSLRMTSGPALERAGDLAAMLSNLVEHDVLFIDEIHRIARPAEEMLYLAMEDFRVDVVVGKGPGATSIPLDVAPFTLVGATTRSGALTGPLRDRFGFTAHMDFYEPAELERVLVRSAGILGIQLGADAGAEIARRSRGTPRIANRLLRRVRDFAEVRADGVITRDVAKAALAVYDVDELGLDRLDRAVLSALTRSFSGGPVGVSTLAVAVGEEASTVEEVCEPFLVRAGMVARTPRGRVATALAWTHLGMTPPAGANQPGLFE</sequence>
<feature type="chain" id="PRO_1000089657" description="Holliday junction branch migration complex subunit RuvB">
    <location>
        <begin position="1"/>
        <end position="345"/>
    </location>
</feature>
<feature type="region of interest" description="Large ATPase domain (RuvB-L)" evidence="1">
    <location>
        <begin position="1"/>
        <end position="186"/>
    </location>
</feature>
<feature type="region of interest" description="Small ATPAse domain (RuvB-S)" evidence="1">
    <location>
        <begin position="187"/>
        <end position="257"/>
    </location>
</feature>
<feature type="region of interest" description="Head domain (RuvB-H)" evidence="1">
    <location>
        <begin position="260"/>
        <end position="345"/>
    </location>
</feature>
<feature type="binding site" evidence="1">
    <location>
        <position position="25"/>
    </location>
    <ligand>
        <name>ATP</name>
        <dbReference type="ChEBI" id="CHEBI:30616"/>
    </ligand>
</feature>
<feature type="binding site" evidence="1">
    <location>
        <position position="26"/>
    </location>
    <ligand>
        <name>ATP</name>
        <dbReference type="ChEBI" id="CHEBI:30616"/>
    </ligand>
</feature>
<feature type="binding site" evidence="1">
    <location>
        <position position="67"/>
    </location>
    <ligand>
        <name>ATP</name>
        <dbReference type="ChEBI" id="CHEBI:30616"/>
    </ligand>
</feature>
<feature type="binding site" evidence="1">
    <location>
        <position position="70"/>
    </location>
    <ligand>
        <name>ATP</name>
        <dbReference type="ChEBI" id="CHEBI:30616"/>
    </ligand>
</feature>
<feature type="binding site" evidence="1">
    <location>
        <position position="71"/>
    </location>
    <ligand>
        <name>ATP</name>
        <dbReference type="ChEBI" id="CHEBI:30616"/>
    </ligand>
</feature>
<feature type="binding site" evidence="1">
    <location>
        <position position="71"/>
    </location>
    <ligand>
        <name>Mg(2+)</name>
        <dbReference type="ChEBI" id="CHEBI:18420"/>
    </ligand>
</feature>
<feature type="binding site" evidence="1">
    <location>
        <position position="72"/>
    </location>
    <ligand>
        <name>ATP</name>
        <dbReference type="ChEBI" id="CHEBI:30616"/>
    </ligand>
</feature>
<feature type="binding site" evidence="1">
    <location>
        <begin position="133"/>
        <end position="135"/>
    </location>
    <ligand>
        <name>ATP</name>
        <dbReference type="ChEBI" id="CHEBI:30616"/>
    </ligand>
</feature>
<feature type="binding site" evidence="1">
    <location>
        <position position="176"/>
    </location>
    <ligand>
        <name>ATP</name>
        <dbReference type="ChEBI" id="CHEBI:30616"/>
    </ligand>
</feature>
<feature type="binding site" evidence="1">
    <location>
        <position position="186"/>
    </location>
    <ligand>
        <name>ATP</name>
        <dbReference type="ChEBI" id="CHEBI:30616"/>
    </ligand>
</feature>
<feature type="binding site" evidence="1">
    <location>
        <position position="223"/>
    </location>
    <ligand>
        <name>ATP</name>
        <dbReference type="ChEBI" id="CHEBI:30616"/>
    </ligand>
</feature>
<feature type="binding site" evidence="1">
    <location>
        <position position="315"/>
    </location>
    <ligand>
        <name>DNA</name>
        <dbReference type="ChEBI" id="CHEBI:16991"/>
    </ligand>
</feature>
<feature type="binding site" evidence="1">
    <location>
        <position position="320"/>
    </location>
    <ligand>
        <name>DNA</name>
        <dbReference type="ChEBI" id="CHEBI:16991"/>
    </ligand>
</feature>